<feature type="chain" id="PRO_1000059896" description="Beta-hexosaminidase">
    <location>
        <begin position="1"/>
        <end position="341"/>
    </location>
</feature>
<feature type="active site" description="Proton donor/acceptor" evidence="1">
    <location>
        <position position="176"/>
    </location>
</feature>
<feature type="active site" description="Nucleophile" evidence="1">
    <location>
        <position position="248"/>
    </location>
</feature>
<feature type="binding site" evidence="1">
    <location>
        <position position="62"/>
    </location>
    <ligand>
        <name>substrate</name>
    </ligand>
</feature>
<feature type="binding site" evidence="1">
    <location>
        <position position="70"/>
    </location>
    <ligand>
        <name>substrate</name>
    </ligand>
</feature>
<feature type="binding site" evidence="1">
    <location>
        <position position="133"/>
    </location>
    <ligand>
        <name>substrate</name>
    </ligand>
</feature>
<feature type="binding site" evidence="1">
    <location>
        <begin position="163"/>
        <end position="164"/>
    </location>
    <ligand>
        <name>substrate</name>
    </ligand>
</feature>
<feature type="site" description="Important for catalytic activity" evidence="1">
    <location>
        <position position="174"/>
    </location>
</feature>
<organism>
    <name type="scientific">Escherichia coli O9:H4 (strain HS)</name>
    <dbReference type="NCBI Taxonomy" id="331112"/>
    <lineage>
        <taxon>Bacteria</taxon>
        <taxon>Pseudomonadati</taxon>
        <taxon>Pseudomonadota</taxon>
        <taxon>Gammaproteobacteria</taxon>
        <taxon>Enterobacterales</taxon>
        <taxon>Enterobacteriaceae</taxon>
        <taxon>Escherichia</taxon>
    </lineage>
</organism>
<reference key="1">
    <citation type="journal article" date="2008" name="J. Bacteriol.">
        <title>The pangenome structure of Escherichia coli: comparative genomic analysis of E. coli commensal and pathogenic isolates.</title>
        <authorList>
            <person name="Rasko D.A."/>
            <person name="Rosovitz M.J."/>
            <person name="Myers G.S.A."/>
            <person name="Mongodin E.F."/>
            <person name="Fricke W.F."/>
            <person name="Gajer P."/>
            <person name="Crabtree J."/>
            <person name="Sebaihia M."/>
            <person name="Thomson N.R."/>
            <person name="Chaudhuri R."/>
            <person name="Henderson I.R."/>
            <person name="Sperandio V."/>
            <person name="Ravel J."/>
        </authorList>
    </citation>
    <scope>NUCLEOTIDE SEQUENCE [LARGE SCALE GENOMIC DNA]</scope>
    <source>
        <strain>HS</strain>
    </source>
</reference>
<protein>
    <recommendedName>
        <fullName evidence="1">Beta-hexosaminidase</fullName>
        <ecNumber evidence="1">3.2.1.52</ecNumber>
    </recommendedName>
    <alternativeName>
        <fullName evidence="1">Beta-N-acetylhexosaminidase</fullName>
    </alternativeName>
    <alternativeName>
        <fullName evidence="1">N-acetyl-beta-glucosaminidase</fullName>
    </alternativeName>
</protein>
<name>NAGZ_ECOHS</name>
<accession>A7ZZ65</accession>
<gene>
    <name evidence="1" type="primary">nagZ</name>
    <name type="ordered locus">EcHS_A1230</name>
</gene>
<evidence type="ECO:0000255" key="1">
    <source>
        <dbReference type="HAMAP-Rule" id="MF_00364"/>
    </source>
</evidence>
<keyword id="KW-0131">Cell cycle</keyword>
<keyword id="KW-0132">Cell division</keyword>
<keyword id="KW-0133">Cell shape</keyword>
<keyword id="KW-0961">Cell wall biogenesis/degradation</keyword>
<keyword id="KW-0963">Cytoplasm</keyword>
<keyword id="KW-0326">Glycosidase</keyword>
<keyword id="KW-0378">Hydrolase</keyword>
<keyword id="KW-0573">Peptidoglycan synthesis</keyword>
<sequence>MGPVMLDVEGYELDAEEREILAHPLVGGLILFTRNYHDPAQLRELVRQIRAASRNHLVVAVDQEGGRVQRFREGFTRLPAAQSFAALSGMEEGGKLAQEAGWLMASEMIAMDIDISFAPVLDVGHISAAIGERSYHADPQKALAIASRFIDGMHEAGMKTTGKHFPGHGAVTADSHKETPCDPRPQAEIRAKDMSVFSSLIRENKLDAIMPAHVIYSDVDPRPASGSPYWLKTVLRQELGFDGVIFSDDLSMEGAVIMGSYAERGQASLDAGCDMILVCNNRKGAVSVLDNLSPIKAERVTRLYHKGSFSRQELMDSARWKAISARLNQLHERWQEEKAGH</sequence>
<proteinExistence type="inferred from homology"/>
<dbReference type="EC" id="3.2.1.52" evidence="1"/>
<dbReference type="EMBL" id="CP000802">
    <property type="protein sequence ID" value="ABV05569.1"/>
    <property type="molecule type" value="Genomic_DNA"/>
</dbReference>
<dbReference type="RefSeq" id="WP_000529318.1">
    <property type="nucleotide sequence ID" value="NC_009800.1"/>
</dbReference>
<dbReference type="SMR" id="A7ZZ65"/>
<dbReference type="CAZy" id="GH3">
    <property type="family name" value="Glycoside Hydrolase Family 3"/>
</dbReference>
<dbReference type="KEGG" id="ecx:EcHS_A1230"/>
<dbReference type="HOGENOM" id="CLU_008392_0_0_6"/>
<dbReference type="UniPathway" id="UPA00544"/>
<dbReference type="GO" id="GO:0005737">
    <property type="term" value="C:cytoplasm"/>
    <property type="evidence" value="ECO:0007669"/>
    <property type="project" value="UniProtKB-SubCell"/>
</dbReference>
<dbReference type="GO" id="GO:0004563">
    <property type="term" value="F:beta-N-acetylhexosaminidase activity"/>
    <property type="evidence" value="ECO:0007669"/>
    <property type="project" value="UniProtKB-UniRule"/>
</dbReference>
<dbReference type="GO" id="GO:0005975">
    <property type="term" value="P:carbohydrate metabolic process"/>
    <property type="evidence" value="ECO:0007669"/>
    <property type="project" value="InterPro"/>
</dbReference>
<dbReference type="GO" id="GO:0051301">
    <property type="term" value="P:cell division"/>
    <property type="evidence" value="ECO:0007669"/>
    <property type="project" value="UniProtKB-KW"/>
</dbReference>
<dbReference type="GO" id="GO:0071555">
    <property type="term" value="P:cell wall organization"/>
    <property type="evidence" value="ECO:0007669"/>
    <property type="project" value="UniProtKB-KW"/>
</dbReference>
<dbReference type="GO" id="GO:0009252">
    <property type="term" value="P:peptidoglycan biosynthetic process"/>
    <property type="evidence" value="ECO:0007669"/>
    <property type="project" value="UniProtKB-KW"/>
</dbReference>
<dbReference type="GO" id="GO:0009254">
    <property type="term" value="P:peptidoglycan turnover"/>
    <property type="evidence" value="ECO:0007669"/>
    <property type="project" value="UniProtKB-UniRule"/>
</dbReference>
<dbReference type="GO" id="GO:0008360">
    <property type="term" value="P:regulation of cell shape"/>
    <property type="evidence" value="ECO:0007669"/>
    <property type="project" value="UniProtKB-KW"/>
</dbReference>
<dbReference type="FunFam" id="3.20.20.300:FF:000001">
    <property type="entry name" value="Beta-hexosaminidase"/>
    <property type="match status" value="1"/>
</dbReference>
<dbReference type="Gene3D" id="3.20.20.300">
    <property type="entry name" value="Glycoside hydrolase, family 3, N-terminal domain"/>
    <property type="match status" value="1"/>
</dbReference>
<dbReference type="HAMAP" id="MF_00364">
    <property type="entry name" value="NagZ"/>
    <property type="match status" value="1"/>
</dbReference>
<dbReference type="InterPro" id="IPR022956">
    <property type="entry name" value="Beta_hexosaminidase_bac"/>
</dbReference>
<dbReference type="InterPro" id="IPR019800">
    <property type="entry name" value="Glyco_hydro_3_AS"/>
</dbReference>
<dbReference type="InterPro" id="IPR001764">
    <property type="entry name" value="Glyco_hydro_3_N"/>
</dbReference>
<dbReference type="InterPro" id="IPR036962">
    <property type="entry name" value="Glyco_hydro_3_N_sf"/>
</dbReference>
<dbReference type="InterPro" id="IPR017853">
    <property type="entry name" value="Glycoside_hydrolase_SF"/>
</dbReference>
<dbReference type="InterPro" id="IPR050226">
    <property type="entry name" value="NagZ_Beta-hexosaminidase"/>
</dbReference>
<dbReference type="NCBIfam" id="NF003740">
    <property type="entry name" value="PRK05337.1"/>
    <property type="match status" value="1"/>
</dbReference>
<dbReference type="PANTHER" id="PTHR30480:SF13">
    <property type="entry name" value="BETA-HEXOSAMINIDASE"/>
    <property type="match status" value="1"/>
</dbReference>
<dbReference type="PANTHER" id="PTHR30480">
    <property type="entry name" value="BETA-HEXOSAMINIDASE-RELATED"/>
    <property type="match status" value="1"/>
</dbReference>
<dbReference type="Pfam" id="PF00933">
    <property type="entry name" value="Glyco_hydro_3"/>
    <property type="match status" value="1"/>
</dbReference>
<dbReference type="SUPFAM" id="SSF51445">
    <property type="entry name" value="(Trans)glycosidases"/>
    <property type="match status" value="1"/>
</dbReference>
<dbReference type="PROSITE" id="PS00775">
    <property type="entry name" value="GLYCOSYL_HYDROL_F3"/>
    <property type="match status" value="1"/>
</dbReference>
<comment type="function">
    <text evidence="1">Plays a role in peptidoglycan recycling by cleaving the terminal beta-1,4-linked N-acetylglucosamine (GlcNAc) from peptide-linked peptidoglycan fragments, giving rise to free GlcNAc, anhydro-N-acetylmuramic acid and anhydro-N-acetylmuramic acid-linked peptides.</text>
</comment>
<comment type="catalytic activity">
    <reaction evidence="1">
        <text>Hydrolysis of terminal non-reducing N-acetyl-D-hexosamine residues in N-acetyl-beta-D-hexosaminides.</text>
        <dbReference type="EC" id="3.2.1.52"/>
    </reaction>
</comment>
<comment type="pathway">
    <text evidence="1">Cell wall biogenesis; peptidoglycan recycling.</text>
</comment>
<comment type="subcellular location">
    <subcellularLocation>
        <location evidence="1">Cytoplasm</location>
    </subcellularLocation>
</comment>
<comment type="similarity">
    <text evidence="1">Belongs to the glycosyl hydrolase 3 family. NagZ subfamily.</text>
</comment>